<evidence type="ECO:0000250" key="1"/>
<evidence type="ECO:0000305" key="2"/>
<evidence type="ECO:0000312" key="3">
    <source>
        <dbReference type="HGNC" id="HGNC:18915"/>
    </source>
</evidence>
<proteinExistence type="evidence at protein level"/>
<gene>
    <name evidence="3" type="primary">KRTAP9-7</name>
    <name type="synonym">KAP9.7</name>
    <name type="synonym">KRTAP9.7</name>
    <name evidence="3" type="synonym">KRTAP9L1</name>
</gene>
<comment type="function">
    <text evidence="1">In the hair cortex, hair keratin intermediate filaments are embedded in an interfilamentous matrix, consisting of hair keratin-associated proteins (KRTAP), which are essential for the formation of a rigid and resistant hair shaft through their extensive disulfide bond cross-linking with abundant cysteine residues of hair keratins. The matrix proteins include the high-sulfur and high-glycine-tyrosine keratins (By similarity).</text>
</comment>
<comment type="subunit">
    <text evidence="1">Interacts with hair keratins.</text>
</comment>
<comment type="similarity">
    <text evidence="2">Belongs to the KRTAP type 9 family.</text>
</comment>
<protein>
    <recommendedName>
        <fullName evidence="2">Keratin-associated protein 9-7</fullName>
    </recommendedName>
    <alternativeName>
        <fullName evidence="3">Keratin-associated protein 9-like 1</fullName>
    </alternativeName>
</protein>
<organism>
    <name type="scientific">Homo sapiens</name>
    <name type="common">Human</name>
    <dbReference type="NCBI Taxonomy" id="9606"/>
    <lineage>
        <taxon>Eukaryota</taxon>
        <taxon>Metazoa</taxon>
        <taxon>Chordata</taxon>
        <taxon>Craniata</taxon>
        <taxon>Vertebrata</taxon>
        <taxon>Euteleostomi</taxon>
        <taxon>Mammalia</taxon>
        <taxon>Eutheria</taxon>
        <taxon>Euarchontoglires</taxon>
        <taxon>Primates</taxon>
        <taxon>Haplorrhini</taxon>
        <taxon>Catarrhini</taxon>
        <taxon>Hominidae</taxon>
        <taxon>Homo</taxon>
    </lineage>
</organism>
<sequence length="169" mass="17793">MTHCCSPCCQPTCCRTTCWKPTTVTTCSSTPCCQPSCCVSSCCQPCCHPTCCQNTCCRTTCCQPTCVTSCCQPSCCSTPCCQPICCGSSCCGQTSCGSSCCQPSSCAPIYCRRTCYHPTSVYLPGCLNQSCGSSCCQPCCRPACCETTCCRTTCFQPTCVTSCCQPACC</sequence>
<reference key="1">
    <citation type="journal article" date="2006" name="Nature">
        <title>DNA sequence of human chromosome 17 and analysis of rearrangement in the human lineage.</title>
        <authorList>
            <person name="Zody M.C."/>
            <person name="Garber M."/>
            <person name="Adams D.J."/>
            <person name="Sharpe T."/>
            <person name="Harrow J."/>
            <person name="Lupski J.R."/>
            <person name="Nicholson C."/>
            <person name="Searle S.M."/>
            <person name="Wilming L."/>
            <person name="Young S.K."/>
            <person name="Abouelleil A."/>
            <person name="Allen N.R."/>
            <person name="Bi W."/>
            <person name="Bloom T."/>
            <person name="Borowsky M.L."/>
            <person name="Bugalter B.E."/>
            <person name="Butler J."/>
            <person name="Chang J.L."/>
            <person name="Chen C.-K."/>
            <person name="Cook A."/>
            <person name="Corum B."/>
            <person name="Cuomo C.A."/>
            <person name="de Jong P.J."/>
            <person name="DeCaprio D."/>
            <person name="Dewar K."/>
            <person name="FitzGerald M."/>
            <person name="Gilbert J."/>
            <person name="Gibson R."/>
            <person name="Gnerre S."/>
            <person name="Goldstein S."/>
            <person name="Grafham D.V."/>
            <person name="Grocock R."/>
            <person name="Hafez N."/>
            <person name="Hagopian D.S."/>
            <person name="Hart E."/>
            <person name="Norman C.H."/>
            <person name="Humphray S."/>
            <person name="Jaffe D.B."/>
            <person name="Jones M."/>
            <person name="Kamal M."/>
            <person name="Khodiyar V.K."/>
            <person name="LaButti K."/>
            <person name="Laird G."/>
            <person name="Lehoczky J."/>
            <person name="Liu X."/>
            <person name="Lokyitsang T."/>
            <person name="Loveland J."/>
            <person name="Lui A."/>
            <person name="Macdonald P."/>
            <person name="Major J.E."/>
            <person name="Matthews L."/>
            <person name="Mauceli E."/>
            <person name="McCarroll S.A."/>
            <person name="Mihalev A.H."/>
            <person name="Mudge J."/>
            <person name="Nguyen C."/>
            <person name="Nicol R."/>
            <person name="O'Leary S.B."/>
            <person name="Osoegawa K."/>
            <person name="Schwartz D.C."/>
            <person name="Shaw-Smith C."/>
            <person name="Stankiewicz P."/>
            <person name="Steward C."/>
            <person name="Swarbreck D."/>
            <person name="Venkataraman V."/>
            <person name="Whittaker C.A."/>
            <person name="Yang X."/>
            <person name="Zimmer A.R."/>
            <person name="Bradley A."/>
            <person name="Hubbard T."/>
            <person name="Birren B.W."/>
            <person name="Rogers J."/>
            <person name="Lander E.S."/>
            <person name="Nusbaum C."/>
        </authorList>
    </citation>
    <scope>NUCLEOTIDE SEQUENCE [LARGE SCALE GENOMIC DNA]</scope>
</reference>
<name>KRA97_HUMAN</name>
<keyword id="KW-0416">Keratin</keyword>
<keyword id="KW-1267">Proteomics identification</keyword>
<keyword id="KW-1185">Reference proteome</keyword>
<keyword id="KW-0677">Repeat</keyword>
<accession>A8MTY7</accession>
<dbReference type="EMBL" id="AC006070">
    <property type="status" value="NOT_ANNOTATED_CDS"/>
    <property type="molecule type" value="Genomic_DNA"/>
</dbReference>
<dbReference type="CCDS" id="CCDS59287.1"/>
<dbReference type="RefSeq" id="NP_001264261.1">
    <property type="nucleotide sequence ID" value="NM_001277332.1"/>
</dbReference>
<dbReference type="BioGRID" id="124441">
    <property type="interactions" value="1"/>
</dbReference>
<dbReference type="FunCoup" id="A8MTY7">
    <property type="interactions" value="28"/>
</dbReference>
<dbReference type="STRING" id="9606.ENSP00000375149"/>
<dbReference type="BioMuta" id="KRTAP9-7"/>
<dbReference type="MassIVE" id="A8MTY7"/>
<dbReference type="PaxDb" id="9606-ENSP00000375149"/>
<dbReference type="PeptideAtlas" id="A8MTY7"/>
<dbReference type="DNASU" id="100505724"/>
<dbReference type="Ensembl" id="ENST00000391354.2">
    <property type="protein sequence ID" value="ENSP00000375149.1"/>
    <property type="gene ID" value="ENSG00000180386.8"/>
</dbReference>
<dbReference type="Ensembl" id="ENST00000573531.1">
    <property type="protein sequence ID" value="ENSP00000460369.1"/>
    <property type="gene ID" value="ENSG00000262221.1"/>
</dbReference>
<dbReference type="GeneID" id="100505724"/>
<dbReference type="KEGG" id="hsa:100505724"/>
<dbReference type="MANE-Select" id="ENST00000391354.2">
    <property type="protein sequence ID" value="ENSP00000375149.1"/>
    <property type="RefSeq nucleotide sequence ID" value="NM_001277332.1"/>
    <property type="RefSeq protein sequence ID" value="NP_001264261.1"/>
</dbReference>
<dbReference type="UCSC" id="uc031rah.2">
    <property type="organism name" value="human"/>
</dbReference>
<dbReference type="AGR" id="HGNC:18915"/>
<dbReference type="CTD" id="100505724"/>
<dbReference type="GeneCards" id="KRTAP9-7"/>
<dbReference type="HGNC" id="HGNC:18915">
    <property type="gene designation" value="KRTAP9-7"/>
</dbReference>
<dbReference type="HPA" id="ENSG00000180386">
    <property type="expression patterns" value="Tissue enriched (skin)"/>
</dbReference>
<dbReference type="neXtProt" id="NX_A8MTY7"/>
<dbReference type="VEuPathDB" id="HostDB:ENSG00000180386"/>
<dbReference type="eggNOG" id="KOG4726">
    <property type="taxonomic scope" value="Eukaryota"/>
</dbReference>
<dbReference type="GeneTree" id="ENSGT00940000156135"/>
<dbReference type="HOGENOM" id="CLU_113141_0_0_1"/>
<dbReference type="InParanoid" id="A8MTY7"/>
<dbReference type="OMA" id="CCAPECC"/>
<dbReference type="PAN-GO" id="A8MTY7">
    <property type="GO annotations" value="0 GO annotations based on evolutionary models"/>
</dbReference>
<dbReference type="PhylomeDB" id="A8MTY7"/>
<dbReference type="TreeFam" id="TF351356"/>
<dbReference type="PathwayCommons" id="A8MTY7"/>
<dbReference type="Reactome" id="R-HSA-6805567">
    <property type="pathway name" value="Keratinization"/>
</dbReference>
<dbReference type="SignaLink" id="A8MTY7"/>
<dbReference type="BioGRID-ORCS" id="100505724">
    <property type="hits" value="11 hits in 1053 CRISPR screens"/>
</dbReference>
<dbReference type="GenomeRNAi" id="100505724"/>
<dbReference type="Pharos" id="A8MTY7">
    <property type="development level" value="Tdark"/>
</dbReference>
<dbReference type="PRO" id="PR:A8MTY7"/>
<dbReference type="Proteomes" id="UP000005640">
    <property type="component" value="Chromosome 17"/>
</dbReference>
<dbReference type="RNAct" id="A8MTY7">
    <property type="molecule type" value="protein"/>
</dbReference>
<dbReference type="Bgee" id="ENSG00000180386">
    <property type="expression patterns" value="Expressed in skin of abdomen and 6 other cell types or tissues"/>
</dbReference>
<dbReference type="GO" id="GO:0005829">
    <property type="term" value="C:cytosol"/>
    <property type="evidence" value="ECO:0000304"/>
    <property type="project" value="Reactome"/>
</dbReference>
<dbReference type="GO" id="GO:0045095">
    <property type="term" value="C:keratin filament"/>
    <property type="evidence" value="ECO:0007669"/>
    <property type="project" value="InterPro"/>
</dbReference>
<dbReference type="InterPro" id="IPR002494">
    <property type="entry name" value="KAP"/>
</dbReference>
<dbReference type="Pfam" id="PF13885">
    <property type="entry name" value="Keratin_B2_2"/>
    <property type="match status" value="3"/>
</dbReference>
<feature type="chain" id="PRO_0000332259" description="Keratin-associated protein 9-7">
    <location>
        <begin position="1"/>
        <end position="169"/>
    </location>
</feature>
<feature type="repeat" description="1">
    <location>
        <begin position="8"/>
        <end position="12"/>
    </location>
</feature>
<feature type="repeat" description="2">
    <location>
        <begin position="13"/>
        <end position="17"/>
    </location>
</feature>
<feature type="repeat" description="3">
    <location>
        <begin position="32"/>
        <end position="36"/>
    </location>
</feature>
<feature type="repeat" description="4">
    <location>
        <begin position="37"/>
        <end position="41"/>
    </location>
</feature>
<feature type="repeat" description="5">
    <location>
        <begin position="46"/>
        <end position="50"/>
    </location>
</feature>
<feature type="repeat" description="6">
    <location>
        <begin position="51"/>
        <end position="55"/>
    </location>
</feature>
<feature type="repeat" description="7">
    <location>
        <begin position="56"/>
        <end position="60"/>
    </location>
</feature>
<feature type="repeat" description="8">
    <location>
        <begin position="61"/>
        <end position="65"/>
    </location>
</feature>
<feature type="repeat" description="9">
    <location>
        <begin position="75"/>
        <end position="79"/>
    </location>
</feature>
<feature type="repeat" description="10">
    <location>
        <begin position="80"/>
        <end position="84"/>
    </location>
</feature>
<feature type="repeat" description="11">
    <location>
        <begin position="85"/>
        <end position="89"/>
    </location>
</feature>
<feature type="repeat" description="12">
    <location>
        <begin position="90"/>
        <end position="94"/>
    </location>
</feature>
<feature type="repeat" description="13">
    <location>
        <begin position="100"/>
        <end position="104"/>
    </location>
</feature>
<feature type="repeat" description="14">
    <location>
        <begin position="139"/>
        <end position="143"/>
    </location>
</feature>
<feature type="repeat" description="15">
    <location>
        <begin position="144"/>
        <end position="148"/>
    </location>
</feature>
<feature type="repeat" description="16">
    <location>
        <begin position="149"/>
        <end position="153"/>
    </location>
</feature>
<feature type="repeat" description="17">
    <location>
        <begin position="163"/>
        <end position="167"/>
    </location>
</feature>
<feature type="region of interest" description="17 X 5 AA repeats of C-C-[VGSREQH]-[SQTPN]-[STPAI]">
    <location>
        <begin position="8"/>
        <end position="167"/>
    </location>
</feature>
<feature type="sequence variant" id="VAR_042995" description="In dbSNP:rs4890107.">
    <original>T</original>
    <variation>I</variation>
    <location>
        <position position="23"/>
    </location>
</feature>
<feature type="sequence variant" id="VAR_042996" description="In dbSNP:rs12948628.">
    <original>S</original>
    <variation>N</variation>
    <location>
        <position position="130"/>
    </location>
</feature>